<dbReference type="EMBL" id="CP000301">
    <property type="protein sequence ID" value="ABD88999.1"/>
    <property type="molecule type" value="Genomic_DNA"/>
</dbReference>
<dbReference type="SMR" id="Q211D7"/>
<dbReference type="STRING" id="316056.RPC_3459"/>
<dbReference type="KEGG" id="rpc:RPC_3459"/>
<dbReference type="eggNOG" id="COG0222">
    <property type="taxonomic scope" value="Bacteria"/>
</dbReference>
<dbReference type="HOGENOM" id="CLU_086499_3_0_5"/>
<dbReference type="OrthoDB" id="9811748at2"/>
<dbReference type="GO" id="GO:0022625">
    <property type="term" value="C:cytosolic large ribosomal subunit"/>
    <property type="evidence" value="ECO:0007669"/>
    <property type="project" value="TreeGrafter"/>
</dbReference>
<dbReference type="GO" id="GO:0003729">
    <property type="term" value="F:mRNA binding"/>
    <property type="evidence" value="ECO:0007669"/>
    <property type="project" value="TreeGrafter"/>
</dbReference>
<dbReference type="GO" id="GO:0003735">
    <property type="term" value="F:structural constituent of ribosome"/>
    <property type="evidence" value="ECO:0007669"/>
    <property type="project" value="InterPro"/>
</dbReference>
<dbReference type="GO" id="GO:0006412">
    <property type="term" value="P:translation"/>
    <property type="evidence" value="ECO:0007669"/>
    <property type="project" value="UniProtKB-UniRule"/>
</dbReference>
<dbReference type="CDD" id="cd00387">
    <property type="entry name" value="Ribosomal_L7_L12"/>
    <property type="match status" value="1"/>
</dbReference>
<dbReference type="FunFam" id="1.20.5.710:FF:000007">
    <property type="entry name" value="50S ribosomal protein L7/L12"/>
    <property type="match status" value="1"/>
</dbReference>
<dbReference type="FunFam" id="3.30.1390.10:FF:000001">
    <property type="entry name" value="50S ribosomal protein L7/L12"/>
    <property type="match status" value="1"/>
</dbReference>
<dbReference type="Gene3D" id="3.30.1390.10">
    <property type="match status" value="1"/>
</dbReference>
<dbReference type="Gene3D" id="1.20.5.710">
    <property type="entry name" value="Single helix bin"/>
    <property type="match status" value="1"/>
</dbReference>
<dbReference type="HAMAP" id="MF_00368">
    <property type="entry name" value="Ribosomal_bL12"/>
    <property type="match status" value="1"/>
</dbReference>
<dbReference type="InterPro" id="IPR000206">
    <property type="entry name" value="Ribosomal_bL12"/>
</dbReference>
<dbReference type="InterPro" id="IPR013823">
    <property type="entry name" value="Ribosomal_bL12_C"/>
</dbReference>
<dbReference type="InterPro" id="IPR014719">
    <property type="entry name" value="Ribosomal_bL12_C/ClpS-like"/>
</dbReference>
<dbReference type="InterPro" id="IPR008932">
    <property type="entry name" value="Ribosomal_bL12_oligo"/>
</dbReference>
<dbReference type="InterPro" id="IPR036235">
    <property type="entry name" value="Ribosomal_bL12_oligo_N_sf"/>
</dbReference>
<dbReference type="NCBIfam" id="TIGR00855">
    <property type="entry name" value="L12"/>
    <property type="match status" value="1"/>
</dbReference>
<dbReference type="PANTHER" id="PTHR45987">
    <property type="entry name" value="39S RIBOSOMAL PROTEIN L12"/>
    <property type="match status" value="1"/>
</dbReference>
<dbReference type="PANTHER" id="PTHR45987:SF4">
    <property type="entry name" value="LARGE RIBOSOMAL SUBUNIT PROTEIN BL12M"/>
    <property type="match status" value="1"/>
</dbReference>
<dbReference type="Pfam" id="PF00542">
    <property type="entry name" value="Ribosomal_L12"/>
    <property type="match status" value="1"/>
</dbReference>
<dbReference type="Pfam" id="PF16320">
    <property type="entry name" value="Ribosomal_L12_N"/>
    <property type="match status" value="1"/>
</dbReference>
<dbReference type="SUPFAM" id="SSF54736">
    <property type="entry name" value="ClpS-like"/>
    <property type="match status" value="1"/>
</dbReference>
<dbReference type="SUPFAM" id="SSF48300">
    <property type="entry name" value="Ribosomal protein L7/12, oligomerisation (N-terminal) domain"/>
    <property type="match status" value="1"/>
</dbReference>
<accession>Q211D7</accession>
<comment type="function">
    <text evidence="1">Forms part of the ribosomal stalk which helps the ribosome interact with GTP-bound translation factors. Is thus essential for accurate translation.</text>
</comment>
<comment type="subunit">
    <text evidence="1">Homodimer. Part of the ribosomal stalk of the 50S ribosomal subunit. Forms a multimeric L10(L12)X complex, where L10 forms an elongated spine to which 2 to 4 L12 dimers bind in a sequential fashion. Binds GTP-bound translation factors.</text>
</comment>
<comment type="similarity">
    <text evidence="1">Belongs to the bacterial ribosomal protein bL12 family.</text>
</comment>
<proteinExistence type="inferred from homology"/>
<name>RL7_RHOPB</name>
<keyword id="KW-0687">Ribonucleoprotein</keyword>
<keyword id="KW-0689">Ribosomal protein</keyword>
<feature type="chain" id="PRO_0000243482" description="Large ribosomal subunit protein bL12">
    <location>
        <begin position="1"/>
        <end position="123"/>
    </location>
</feature>
<organism>
    <name type="scientific">Rhodopseudomonas palustris (strain BisB18)</name>
    <dbReference type="NCBI Taxonomy" id="316056"/>
    <lineage>
        <taxon>Bacteria</taxon>
        <taxon>Pseudomonadati</taxon>
        <taxon>Pseudomonadota</taxon>
        <taxon>Alphaproteobacteria</taxon>
        <taxon>Hyphomicrobiales</taxon>
        <taxon>Nitrobacteraceae</taxon>
        <taxon>Rhodopseudomonas</taxon>
    </lineage>
</organism>
<gene>
    <name evidence="1" type="primary">rplL</name>
    <name type="ordered locus">RPC_3459</name>
</gene>
<protein>
    <recommendedName>
        <fullName evidence="1">Large ribosomal subunit protein bL12</fullName>
    </recommendedName>
    <alternativeName>
        <fullName evidence="2">50S ribosomal protein L7/L12</fullName>
    </alternativeName>
</protein>
<sequence length="123" mass="12700">MADLQKIVDDLSSLTVLEAAELAKLLEEKWGVSAAAAVAVAGPAAAAAAPAEEKTEFTVVLAAAGEKKIEVIKEVRAITGLGLKEAKDLVEGAPKPVKEGVNKDEADKIKAQLEKAGAKVELK</sequence>
<evidence type="ECO:0000255" key="1">
    <source>
        <dbReference type="HAMAP-Rule" id="MF_00368"/>
    </source>
</evidence>
<evidence type="ECO:0000305" key="2"/>
<reference key="1">
    <citation type="submission" date="2006-03" db="EMBL/GenBank/DDBJ databases">
        <title>Complete sequence of Rhodopseudomonas palustris BisB18.</title>
        <authorList>
            <consortium name="US DOE Joint Genome Institute"/>
            <person name="Copeland A."/>
            <person name="Lucas S."/>
            <person name="Lapidus A."/>
            <person name="Barry K."/>
            <person name="Detter J.C."/>
            <person name="Glavina del Rio T."/>
            <person name="Hammon N."/>
            <person name="Israni S."/>
            <person name="Dalin E."/>
            <person name="Tice H."/>
            <person name="Pitluck S."/>
            <person name="Chain P."/>
            <person name="Malfatti S."/>
            <person name="Shin M."/>
            <person name="Vergez L."/>
            <person name="Schmutz J."/>
            <person name="Larimer F."/>
            <person name="Land M."/>
            <person name="Hauser L."/>
            <person name="Pelletier D.A."/>
            <person name="Kyrpides N."/>
            <person name="Anderson I."/>
            <person name="Oda Y."/>
            <person name="Harwood C.S."/>
            <person name="Richardson P."/>
        </authorList>
    </citation>
    <scope>NUCLEOTIDE SEQUENCE [LARGE SCALE GENOMIC DNA]</scope>
    <source>
        <strain>BisB18</strain>
    </source>
</reference>